<geneLocation type="plasmid">
    <name>pMOL28</name>
</geneLocation>
<proteinExistence type="evidence at transcript level"/>
<evidence type="ECO:0000269" key="1">
    <source>
    </source>
</evidence>
<evidence type="ECO:0000269" key="2">
    <source>
    </source>
</evidence>
<evidence type="ECO:0000303" key="3">
    <source>
    </source>
</evidence>
<evidence type="ECO:0000305" key="4"/>
<evidence type="ECO:0000312" key="5">
    <source>
        <dbReference type="EMBL" id="ABF13062.1"/>
    </source>
</evidence>
<evidence type="ECO:0000312" key="6">
    <source>
        <dbReference type="EMBL" id="CAC42410.1"/>
    </source>
</evidence>
<evidence type="ECO:0000312" key="7">
    <source>
        <dbReference type="EMBL" id="CAI30233.1"/>
    </source>
</evidence>
<accession>P17552</accession>
<accession>Q1L9W4</accession>
<accession>Q5NV01</accession>
<accession>Q93JN1</accession>
<sequence>MNALPSSPETAWLLLVVSLPTSASTARMRFWRGIKALGATALRDGAYLLPNLPGLRAPLQTLATDAASEDGKVWMLSVQAADDQQEAEYRALFDRSTEYAEWMVELSSARSTLSDSDEAELLRVARRHGRGIDAIRKVDFFPNEASARAELQWRDFNAAIDILLSPGEPHGVAGNIPRRDPTQYQGRQWATRQHLWVDRVACAWLIRRFIDPHATFLWLEDVRQCPDDALGFDFDGATFTHIGDRVSFEVLLASFGLDEDKGLARLGQMIHVLDVGGTPVAEASGFEAVLAGARERLPNDDALLDEVGYVLDSLYTHFSSPRKR</sequence>
<comment type="function">
    <text evidence="2">Together with ChrA1, this protein reduces chromate accumulation and is essential for chromate resistance, possibly as a regulatory protein.</text>
</comment>
<comment type="induction">
    <text evidence="1">By chromate; induction increases when cells are grown in the presence of high sulfate concentrations (3 mM SO4(2-)).</text>
</comment>
<comment type="sequence caution" evidence="4">
    <conflict type="erroneous initiation">
        <sequence resource="EMBL-CDS" id="CAI30233"/>
    </conflict>
    <text>Truncated N-terminus.</text>
</comment>
<dbReference type="EMBL" id="AJ313327">
    <property type="protein sequence ID" value="CAC42410.1"/>
    <property type="molecule type" value="Genomic_DNA"/>
</dbReference>
<dbReference type="EMBL" id="X90708">
    <property type="protein sequence ID" value="CAI30233.1"/>
    <property type="status" value="ALT_INIT"/>
    <property type="molecule type" value="Genomic_DNA"/>
</dbReference>
<dbReference type="EMBL" id="CP000355">
    <property type="protein sequence ID" value="ABF13062.1"/>
    <property type="molecule type" value="Genomic_DNA"/>
</dbReference>
<dbReference type="PIR" id="A35177">
    <property type="entry name" value="A35177"/>
</dbReference>
<dbReference type="RefSeq" id="WP_011514878.1">
    <property type="nucleotide sequence ID" value="NC_007972.2"/>
</dbReference>
<dbReference type="RefSeq" id="YP_161711.1">
    <property type="nucleotide sequence ID" value="NC_006525.1"/>
</dbReference>
<dbReference type="SMR" id="P17552"/>
<dbReference type="KEGG" id="rme:Rmet_6203"/>
<dbReference type="HOGENOM" id="CLU_079058_0_0_4"/>
<dbReference type="Proteomes" id="UP000002429">
    <property type="component" value="Plasmid pMOL28"/>
</dbReference>
<dbReference type="GO" id="GO:0046687">
    <property type="term" value="P:response to chromate"/>
    <property type="evidence" value="ECO:0007669"/>
    <property type="project" value="UniProtKB-KW"/>
</dbReference>
<dbReference type="InterPro" id="IPR018634">
    <property type="entry name" value="ChrB_C"/>
</dbReference>
<dbReference type="InterPro" id="IPR046858">
    <property type="entry name" value="ChrB_N"/>
</dbReference>
<dbReference type="Pfam" id="PF09828">
    <property type="entry name" value="ChrB_C"/>
    <property type="match status" value="1"/>
</dbReference>
<dbReference type="Pfam" id="PF20229">
    <property type="entry name" value="ChrB_N"/>
    <property type="match status" value="1"/>
</dbReference>
<protein>
    <recommendedName>
        <fullName evidence="4">Protein ChrB</fullName>
    </recommendedName>
</protein>
<gene>
    <name evidence="6" type="primary">chrB1</name>
    <name evidence="3" type="synonym">chrB</name>
    <name evidence="5" type="ordered locus">Rmet_6203</name>
    <name evidence="7" type="ORF">RMe0089</name>
</gene>
<feature type="chain" id="PRO_0000089655" description="Protein ChrB">
    <location>
        <begin position="1"/>
        <end position="324"/>
    </location>
</feature>
<reference key="1">
    <citation type="journal article" date="1990" name="J. Biol. Chem.">
        <title>Nucleotide sequence and expression of a plasmid-encoded chromate resistance determinant from Alcaligenes eutrophus.</title>
        <authorList>
            <person name="Nies A."/>
            <person name="Nies D.H."/>
            <person name="Silver S."/>
        </authorList>
    </citation>
    <scope>NUCLEOTIDE SEQUENCE [GENOMIC DNA]</scope>
    <scope>FUNCTION</scope>
</reference>
<reference key="2">
    <citation type="journal article" date="2002" name="Arch. Microbiol.">
        <title>New genes involved in chromate resistance in Ralstonia metallidurans strain CH34.</title>
        <authorList>
            <person name="Juhnke S."/>
            <person name="Peitzsch N."/>
            <person name="Huebener N."/>
            <person name="Grosse C."/>
            <person name="Nies D.H."/>
        </authorList>
    </citation>
    <scope>SEQUENCE REVISION TO C-TERMINUS</scope>
    <scope>INDUCTION</scope>
</reference>
<reference key="3">
    <citation type="submission" date="2004-10" db="EMBL/GenBank/DDBJ databases">
        <title>Sequence and features of the Ralstonia metallidurans CH34 heavy metal plasmids pMOL28 and pMOL30.</title>
        <authorList>
            <person name="van der Lelie D."/>
            <person name="Monchy S."/>
            <person name="Taghavi S."/>
            <person name="McCorkle S."/>
            <person name="Dunn J."/>
            <person name="Benotmane M."/>
            <person name="Vallaeys T."/>
            <person name="Lapidus A."/>
            <person name="Mergeay M."/>
        </authorList>
    </citation>
    <scope>NUCLEOTIDE SEQUENCE [LARGE SCALE GENOMIC DNA]</scope>
</reference>
<reference key="4">
    <citation type="journal article" date="2010" name="PLoS ONE">
        <title>The complete genome sequence of Cupriavidus metallidurans strain CH34, a master survivalist in harsh and anthropogenic environments.</title>
        <authorList>
            <person name="Janssen P.J."/>
            <person name="Van Houdt R."/>
            <person name="Moors H."/>
            <person name="Monsieurs P."/>
            <person name="Morin N."/>
            <person name="Michaux A."/>
            <person name="Benotmane M.A."/>
            <person name="Leys N."/>
            <person name="Vallaeys T."/>
            <person name="Lapidus A."/>
            <person name="Monchy S."/>
            <person name="Medigue C."/>
            <person name="Taghavi S."/>
            <person name="McCorkle S."/>
            <person name="Dunn J."/>
            <person name="van der Lelie D."/>
            <person name="Mergeay M."/>
        </authorList>
    </citation>
    <scope>NUCLEOTIDE SEQUENCE [LARGE SCALE GENOMIC DNA]</scope>
    <source>
        <strain>ATCC 43123 / DSM 2839 / NBRC 102507 / CH34</strain>
    </source>
</reference>
<organism>
    <name type="scientific">Cupriavidus metallidurans (strain ATCC 43123 / DSM 2839 / NBRC 102507 / CH34)</name>
    <name type="common">Ralstonia metallidurans</name>
    <dbReference type="NCBI Taxonomy" id="266264"/>
    <lineage>
        <taxon>Bacteria</taxon>
        <taxon>Pseudomonadati</taxon>
        <taxon>Pseudomonadota</taxon>
        <taxon>Betaproteobacteria</taxon>
        <taxon>Burkholderiales</taxon>
        <taxon>Burkholderiaceae</taxon>
        <taxon>Cupriavidus</taxon>
    </lineage>
</organism>
<keyword id="KW-0155">Chromate resistance</keyword>
<keyword id="KW-0614">Plasmid</keyword>
<keyword id="KW-1185">Reference proteome</keyword>
<name>CHRB1_CUPMC</name>